<proteinExistence type="evidence at protein level"/>
<evidence type="ECO:0000250" key="1"/>
<evidence type="ECO:0000250" key="2">
    <source>
        <dbReference type="UniProtKB" id="P02458"/>
    </source>
</evidence>
<evidence type="ECO:0000250" key="3">
    <source>
        <dbReference type="UniProtKB" id="P05539"/>
    </source>
</evidence>
<evidence type="ECO:0000255" key="4"/>
<evidence type="ECO:0000255" key="5">
    <source>
        <dbReference type="PROSITE-ProRule" id="PRU00220"/>
    </source>
</evidence>
<evidence type="ECO:0000255" key="6">
    <source>
        <dbReference type="PROSITE-ProRule" id="PRU00793"/>
    </source>
</evidence>
<evidence type="ECO:0000256" key="7">
    <source>
        <dbReference type="SAM" id="MobiDB-lite"/>
    </source>
</evidence>
<evidence type="ECO:0000269" key="8">
    <source>
    </source>
</evidence>
<evidence type="ECO:0000269" key="9">
    <source>
    </source>
</evidence>
<evidence type="ECO:0000269" key="10">
    <source>
    </source>
</evidence>
<evidence type="ECO:0000303" key="11">
    <source>
    </source>
</evidence>
<evidence type="ECO:0000305" key="12"/>
<evidence type="ECO:0000312" key="13">
    <source>
        <dbReference type="MGI" id="MGI:88452"/>
    </source>
</evidence>
<dbReference type="EMBL" id="M65161">
    <property type="protein sequence ID" value="AAA68099.1"/>
    <property type="molecule type" value="Genomic_DNA"/>
</dbReference>
<dbReference type="EMBL" id="M65161">
    <property type="protein sequence ID" value="AAA68100.1"/>
    <property type="molecule type" value="Genomic_DNA"/>
</dbReference>
<dbReference type="EMBL" id="M65161">
    <property type="protein sequence ID" value="AAA68101.1"/>
    <property type="molecule type" value="Genomic_DNA"/>
</dbReference>
<dbReference type="EMBL" id="M65161">
    <property type="protein sequence ID" value="AAA68102.1"/>
    <property type="molecule type" value="Genomic_DNA"/>
</dbReference>
<dbReference type="EMBL" id="BC030913">
    <property type="protein sequence ID" value="AAH30913.1"/>
    <property type="molecule type" value="mRNA"/>
</dbReference>
<dbReference type="EMBL" id="BC051383">
    <property type="protein sequence ID" value="AAH51383.1"/>
    <property type="molecule type" value="mRNA"/>
</dbReference>
<dbReference type="EMBL" id="BC052326">
    <property type="protein sequence ID" value="AAH52326.1"/>
    <property type="molecule type" value="mRNA"/>
</dbReference>
<dbReference type="EMBL" id="BC082331">
    <property type="protein sequence ID" value="AAH82331.1"/>
    <property type="molecule type" value="mRNA"/>
</dbReference>
<dbReference type="EMBL" id="S63190">
    <property type="protein sequence ID" value="AAB19627.1"/>
    <property type="molecule type" value="Genomic_DNA"/>
</dbReference>
<dbReference type="EMBL" id="M63708">
    <property type="protein sequence ID" value="AAA37436.1"/>
    <property type="molecule type" value="Genomic_DNA"/>
</dbReference>
<dbReference type="EMBL" id="M63709">
    <property type="protein sequence ID" value="AAC06113.1"/>
    <property type="molecule type" value="Genomic_DNA"/>
</dbReference>
<dbReference type="EMBL" id="M63710">
    <property type="protein sequence ID" value="AAA37435.1"/>
    <property type="molecule type" value="Genomic_DNA"/>
</dbReference>
<dbReference type="EMBL" id="AK028295">
    <property type="protein sequence ID" value="BAC25865.1"/>
    <property type="status" value="ALT_INIT"/>
    <property type="molecule type" value="mRNA"/>
</dbReference>
<dbReference type="EMBL" id="X57982">
    <property type="protein sequence ID" value="CAA41047.1"/>
    <property type="molecule type" value="Genomic_DNA"/>
</dbReference>
<dbReference type="CCDS" id="CCDS37189.2">
    <molecule id="P28481-3"/>
</dbReference>
<dbReference type="CCDS" id="CCDS49716.1">
    <molecule id="P28481-7"/>
</dbReference>
<dbReference type="PIR" id="A41182">
    <property type="entry name" value="A41182"/>
</dbReference>
<dbReference type="PIR" id="B41182">
    <property type="entry name" value="B41182"/>
</dbReference>
<dbReference type="RefSeq" id="NP_001106987.2">
    <molecule id="P28481-7"/>
    <property type="nucleotide sequence ID" value="NM_001113515.3"/>
</dbReference>
<dbReference type="RefSeq" id="NP_112440.2">
    <molecule id="P28481-3"/>
    <property type="nucleotide sequence ID" value="NM_031163.4"/>
</dbReference>
<dbReference type="PDB" id="2W65">
    <property type="method" value="X-ray"/>
    <property type="resolution" value="2.21 A"/>
    <property type="chains" value="E=530-538"/>
</dbReference>
<dbReference type="PDB" id="4BKL">
    <property type="method" value="X-ray"/>
    <property type="resolution" value="3.25 A"/>
    <property type="chains" value="E/F/G=744-780"/>
</dbReference>
<dbReference type="PDB" id="5MU0">
    <property type="method" value="X-ray"/>
    <property type="resolution" value="2.70 A"/>
    <property type="chains" value="Q/R/S/T/U/V/W/X=555-571"/>
</dbReference>
<dbReference type="PDB" id="5MUB">
    <property type="method" value="X-ray"/>
    <property type="resolution" value="3.10 A"/>
    <property type="chains" value="E/H/K/N/Q/T/W/X=546-577"/>
</dbReference>
<dbReference type="PDB" id="5MV3">
    <property type="method" value="X-ray"/>
    <property type="resolution" value="2.95 A"/>
    <property type="chains" value="E/H/K/N/Q/T/W/X=1179-1208"/>
</dbReference>
<dbReference type="PDB" id="5MV4">
    <property type="method" value="X-ray"/>
    <property type="resolution" value="2.90 A"/>
    <property type="chains" value="E/H/K/N/Q/T/W/X=792-846"/>
</dbReference>
<dbReference type="PDBsum" id="2W65"/>
<dbReference type="PDBsum" id="4BKL"/>
<dbReference type="PDBsum" id="5MU0"/>
<dbReference type="PDBsum" id="5MUB"/>
<dbReference type="PDBsum" id="5MV3"/>
<dbReference type="PDBsum" id="5MV4"/>
<dbReference type="SMR" id="P28481"/>
<dbReference type="BioGRID" id="198814">
    <property type="interactions" value="6"/>
</dbReference>
<dbReference type="ComplexPortal" id="CPX-2957">
    <property type="entry name" value="Collagen type II trimer"/>
</dbReference>
<dbReference type="ComplexPortal" id="CPX-2975">
    <property type="entry name" value="Collagen type XI trimer variant 1"/>
</dbReference>
<dbReference type="FunCoup" id="P28481">
    <property type="interactions" value="527"/>
</dbReference>
<dbReference type="IntAct" id="P28481">
    <property type="interactions" value="1"/>
</dbReference>
<dbReference type="STRING" id="10090.ENSMUSP00000023123"/>
<dbReference type="GlyCosmos" id="P28481">
    <property type="glycosylation" value="7 sites, No reported glycans"/>
</dbReference>
<dbReference type="GlyGen" id="P28481">
    <property type="glycosylation" value="13 sites, 2 N-linked glycans (2 sites)"/>
</dbReference>
<dbReference type="iPTMnet" id="P28481"/>
<dbReference type="PhosphoSitePlus" id="P28481"/>
<dbReference type="jPOST" id="P28481"/>
<dbReference type="PaxDb" id="10090-ENSMUSP00000023123"/>
<dbReference type="PeptideAtlas" id="P28481"/>
<dbReference type="Pumba" id="P28481"/>
<dbReference type="ABCD" id="P28481">
    <property type="antibodies" value="19 sequenced antibodies"/>
</dbReference>
<dbReference type="Antibodypedia" id="3697">
    <property type="antibodies" value="784 antibodies from 41 providers"/>
</dbReference>
<dbReference type="DNASU" id="12824"/>
<dbReference type="Ensembl" id="ENSMUST00000023123.15">
    <molecule id="P28481-3"/>
    <property type="protein sequence ID" value="ENSMUSP00000023123.9"/>
    <property type="gene ID" value="ENSMUSG00000022483.18"/>
</dbReference>
<dbReference type="Ensembl" id="ENSMUST00000088355.12">
    <molecule id="P28481-7"/>
    <property type="protein sequence ID" value="ENSMUSP00000085693.6"/>
    <property type="gene ID" value="ENSMUSG00000022483.18"/>
</dbReference>
<dbReference type="GeneID" id="12824"/>
<dbReference type="KEGG" id="mmu:12824"/>
<dbReference type="UCSC" id="uc007xlp.2">
    <molecule id="P28481-3"/>
    <property type="organism name" value="mouse"/>
</dbReference>
<dbReference type="UCSC" id="uc007xlq.2">
    <molecule id="P28481-7"/>
    <property type="organism name" value="mouse"/>
</dbReference>
<dbReference type="AGR" id="MGI:88452"/>
<dbReference type="CTD" id="1280"/>
<dbReference type="MGI" id="MGI:88452">
    <property type="gene designation" value="Col2a1"/>
</dbReference>
<dbReference type="VEuPathDB" id="HostDB:ENSMUSG00000022483"/>
<dbReference type="eggNOG" id="KOG3544">
    <property type="taxonomic scope" value="Eukaryota"/>
</dbReference>
<dbReference type="GeneTree" id="ENSGT00940000155224"/>
<dbReference type="HOGENOM" id="CLU_001074_2_3_1"/>
<dbReference type="InParanoid" id="P28481"/>
<dbReference type="OMA" id="NGMINDW"/>
<dbReference type="OrthoDB" id="8939548at2759"/>
<dbReference type="PhylomeDB" id="P28481"/>
<dbReference type="TreeFam" id="TF344135"/>
<dbReference type="Reactome" id="R-MMU-1442490">
    <property type="pathway name" value="Collagen degradation"/>
</dbReference>
<dbReference type="Reactome" id="R-MMU-1474244">
    <property type="pathway name" value="Extracellular matrix organization"/>
</dbReference>
<dbReference type="Reactome" id="R-MMU-1650814">
    <property type="pathway name" value="Collagen biosynthesis and modifying enzymes"/>
</dbReference>
<dbReference type="Reactome" id="R-MMU-186797">
    <property type="pathway name" value="Signaling by PDGF"/>
</dbReference>
<dbReference type="Reactome" id="R-MMU-198933">
    <property type="pathway name" value="Immunoregulatory interactions between a Lymphoid and a non-Lymphoid cell"/>
</dbReference>
<dbReference type="Reactome" id="R-MMU-2022090">
    <property type="pathway name" value="Assembly of collagen fibrils and other multimeric structures"/>
</dbReference>
<dbReference type="Reactome" id="R-MMU-216083">
    <property type="pathway name" value="Integrin cell surface interactions"/>
</dbReference>
<dbReference type="Reactome" id="R-MMU-3000171">
    <property type="pathway name" value="Non-integrin membrane-ECM interactions"/>
</dbReference>
<dbReference type="Reactome" id="R-MMU-3000178">
    <property type="pathway name" value="ECM proteoglycans"/>
</dbReference>
<dbReference type="Reactome" id="R-MMU-419037">
    <property type="pathway name" value="NCAM1 interactions"/>
</dbReference>
<dbReference type="Reactome" id="R-MMU-8874081">
    <property type="pathway name" value="MET activates PTK2 signaling"/>
</dbReference>
<dbReference type="Reactome" id="R-MMU-8948216">
    <property type="pathway name" value="Collagen chain trimerization"/>
</dbReference>
<dbReference type="BioGRID-ORCS" id="12824">
    <property type="hits" value="5 hits in 79 CRISPR screens"/>
</dbReference>
<dbReference type="ChiTaRS" id="Col2a1">
    <property type="organism name" value="mouse"/>
</dbReference>
<dbReference type="EvolutionaryTrace" id="P28481"/>
<dbReference type="PRO" id="PR:P28481"/>
<dbReference type="Proteomes" id="UP000000589">
    <property type="component" value="Chromosome 15"/>
</dbReference>
<dbReference type="RNAct" id="P28481">
    <property type="molecule type" value="protein"/>
</dbReference>
<dbReference type="Bgee" id="ENSMUSG00000022483">
    <property type="expression patterns" value="Expressed in epithelium of cochlear duct and 298 other cell types or tissues"/>
</dbReference>
<dbReference type="GO" id="GO:0005604">
    <property type="term" value="C:basement membrane"/>
    <property type="evidence" value="ECO:0000314"/>
    <property type="project" value="MGI"/>
</dbReference>
<dbReference type="GO" id="GO:0005581">
    <property type="term" value="C:collagen trimer"/>
    <property type="evidence" value="ECO:0000314"/>
    <property type="project" value="MGI"/>
</dbReference>
<dbReference type="GO" id="GO:0005585">
    <property type="term" value="C:collagen type II trimer"/>
    <property type="evidence" value="ECO:0000314"/>
    <property type="project" value="MGI"/>
</dbReference>
<dbReference type="GO" id="GO:0005592">
    <property type="term" value="C:collagen type XI trimer"/>
    <property type="evidence" value="ECO:0000303"/>
    <property type="project" value="ComplexPortal"/>
</dbReference>
<dbReference type="GO" id="GO:0062023">
    <property type="term" value="C:collagen-containing extracellular matrix"/>
    <property type="evidence" value="ECO:0007005"/>
    <property type="project" value="BHF-UCL"/>
</dbReference>
<dbReference type="GO" id="GO:0005737">
    <property type="term" value="C:cytoplasm"/>
    <property type="evidence" value="ECO:0000314"/>
    <property type="project" value="MGI"/>
</dbReference>
<dbReference type="GO" id="GO:0031012">
    <property type="term" value="C:extracellular matrix"/>
    <property type="evidence" value="ECO:0000314"/>
    <property type="project" value="MGI"/>
</dbReference>
<dbReference type="GO" id="GO:0005615">
    <property type="term" value="C:extracellular space"/>
    <property type="evidence" value="ECO:0000314"/>
    <property type="project" value="MGI"/>
</dbReference>
<dbReference type="GO" id="GO:0005201">
    <property type="term" value="F:extracellular matrix structural constituent"/>
    <property type="evidence" value="ECO:0007669"/>
    <property type="project" value="InterPro"/>
</dbReference>
<dbReference type="GO" id="GO:0042802">
    <property type="term" value="F:identical protein binding"/>
    <property type="evidence" value="ECO:0000353"/>
    <property type="project" value="IntAct"/>
</dbReference>
<dbReference type="GO" id="GO:0046872">
    <property type="term" value="F:metal ion binding"/>
    <property type="evidence" value="ECO:0007669"/>
    <property type="project" value="UniProtKB-KW"/>
</dbReference>
<dbReference type="GO" id="GO:0042289">
    <property type="term" value="F:MHC class II protein binding"/>
    <property type="evidence" value="ECO:0007669"/>
    <property type="project" value="Ensembl"/>
</dbReference>
<dbReference type="GO" id="GO:0048407">
    <property type="term" value="F:platelet-derived growth factor binding"/>
    <property type="evidence" value="ECO:0000266"/>
    <property type="project" value="MGI"/>
</dbReference>
<dbReference type="GO" id="GO:0042803">
    <property type="term" value="F:protein homodimerization activity"/>
    <property type="evidence" value="ECO:0007669"/>
    <property type="project" value="Ensembl"/>
</dbReference>
<dbReference type="GO" id="GO:0043394">
    <property type="term" value="F:proteoglycan binding"/>
    <property type="evidence" value="ECO:0000266"/>
    <property type="project" value="MGI"/>
</dbReference>
<dbReference type="GO" id="GO:0097065">
    <property type="term" value="P:anterior head development"/>
    <property type="evidence" value="ECO:0000315"/>
    <property type="project" value="MGI"/>
</dbReference>
<dbReference type="GO" id="GO:0060348">
    <property type="term" value="P:bone development"/>
    <property type="evidence" value="ECO:0000315"/>
    <property type="project" value="MGI"/>
</dbReference>
<dbReference type="GO" id="GO:0001502">
    <property type="term" value="P:cartilage condensation"/>
    <property type="evidence" value="ECO:0000315"/>
    <property type="project" value="MGI"/>
</dbReference>
<dbReference type="GO" id="GO:0051216">
    <property type="term" value="P:cartilage development"/>
    <property type="evidence" value="ECO:0000315"/>
    <property type="project" value="MGI"/>
</dbReference>
<dbReference type="GO" id="GO:0060351">
    <property type="term" value="P:cartilage development involved in endochondral bone morphogenesis"/>
    <property type="evidence" value="ECO:0000315"/>
    <property type="project" value="MGI"/>
</dbReference>
<dbReference type="GO" id="GO:0071773">
    <property type="term" value="P:cellular response to BMP stimulus"/>
    <property type="evidence" value="ECO:0000314"/>
    <property type="project" value="MGI"/>
</dbReference>
<dbReference type="GO" id="GO:0007417">
    <property type="term" value="P:central nervous system development"/>
    <property type="evidence" value="ECO:0000270"/>
    <property type="project" value="UniProtKB"/>
</dbReference>
<dbReference type="GO" id="GO:0002062">
    <property type="term" value="P:chondrocyte differentiation"/>
    <property type="evidence" value="ECO:0000315"/>
    <property type="project" value="MGI"/>
</dbReference>
<dbReference type="GO" id="GO:0030199">
    <property type="term" value="P:collagen fibril organization"/>
    <property type="evidence" value="ECO:0000315"/>
    <property type="project" value="MGI"/>
</dbReference>
<dbReference type="GO" id="GO:0060272">
    <property type="term" value="P:embryonic skeletal joint morphogenesis"/>
    <property type="evidence" value="ECO:0007669"/>
    <property type="project" value="Ensembl"/>
</dbReference>
<dbReference type="GO" id="GO:0001958">
    <property type="term" value="P:endochondral ossification"/>
    <property type="evidence" value="ECO:0000315"/>
    <property type="project" value="MGI"/>
</dbReference>
<dbReference type="GO" id="GO:0097192">
    <property type="term" value="P:extrinsic apoptotic signaling pathway in absence of ligand"/>
    <property type="evidence" value="ECO:0000315"/>
    <property type="project" value="MGI"/>
</dbReference>
<dbReference type="GO" id="GO:0003007">
    <property type="term" value="P:heart morphogenesis"/>
    <property type="evidence" value="ECO:0000315"/>
    <property type="project" value="MGI"/>
</dbReference>
<dbReference type="GO" id="GO:0048839">
    <property type="term" value="P:inner ear development"/>
    <property type="evidence" value="ECO:0000315"/>
    <property type="project" value="MGI"/>
</dbReference>
<dbReference type="GO" id="GO:0042472">
    <property type="term" value="P:inner ear morphogenesis"/>
    <property type="evidence" value="ECO:0000315"/>
    <property type="project" value="MGI"/>
</dbReference>
<dbReference type="GO" id="GO:0060174">
    <property type="term" value="P:limb bud formation"/>
    <property type="evidence" value="ECO:0000270"/>
    <property type="project" value="UniProtKB"/>
</dbReference>
<dbReference type="GO" id="GO:0035108">
    <property type="term" value="P:limb morphogenesis"/>
    <property type="evidence" value="ECO:0000315"/>
    <property type="project" value="MGI"/>
</dbReference>
<dbReference type="GO" id="GO:2001240">
    <property type="term" value="P:negative regulation of extrinsic apoptotic signaling pathway in absence of ligand"/>
    <property type="evidence" value="ECO:0000315"/>
    <property type="project" value="MGI"/>
</dbReference>
<dbReference type="GO" id="GO:0030903">
    <property type="term" value="P:notochord development"/>
    <property type="evidence" value="ECO:0000270"/>
    <property type="project" value="UniProtKB"/>
</dbReference>
<dbReference type="GO" id="GO:0001503">
    <property type="term" value="P:ossification"/>
    <property type="evidence" value="ECO:0000270"/>
    <property type="project" value="UniProtKB"/>
</dbReference>
<dbReference type="GO" id="GO:0071599">
    <property type="term" value="P:otic vesicle development"/>
    <property type="evidence" value="ECO:0000270"/>
    <property type="project" value="UniProtKB"/>
</dbReference>
<dbReference type="GO" id="GO:0006029">
    <property type="term" value="P:proteoglycan metabolic process"/>
    <property type="evidence" value="ECO:0000315"/>
    <property type="project" value="MGI"/>
</dbReference>
<dbReference type="GO" id="GO:0010468">
    <property type="term" value="P:regulation of gene expression"/>
    <property type="evidence" value="ECO:0000315"/>
    <property type="project" value="MGI"/>
</dbReference>
<dbReference type="GO" id="GO:0060021">
    <property type="term" value="P:roof of mouth development"/>
    <property type="evidence" value="ECO:0000315"/>
    <property type="project" value="MGI"/>
</dbReference>
<dbReference type="GO" id="GO:0007605">
    <property type="term" value="P:sensory perception of sound"/>
    <property type="evidence" value="ECO:0007669"/>
    <property type="project" value="Ensembl"/>
</dbReference>
<dbReference type="GO" id="GO:0048705">
    <property type="term" value="P:skeletal system morphogenesis"/>
    <property type="evidence" value="ECO:0000315"/>
    <property type="project" value="MGI"/>
</dbReference>
<dbReference type="GO" id="GO:0001894">
    <property type="term" value="P:tissue homeostasis"/>
    <property type="evidence" value="ECO:0000315"/>
    <property type="project" value="MGI"/>
</dbReference>
<dbReference type="GO" id="GO:0007601">
    <property type="term" value="P:visual perception"/>
    <property type="evidence" value="ECO:0007669"/>
    <property type="project" value="Ensembl"/>
</dbReference>
<dbReference type="FunFam" id="2.60.120.1000:FF:000001">
    <property type="entry name" value="Collagen alpha-1 type I chain"/>
    <property type="match status" value="1"/>
</dbReference>
<dbReference type="FunFam" id="2.10.70.10:FF:000013">
    <property type="entry name" value="Collagen, type I, alpha 1"/>
    <property type="match status" value="1"/>
</dbReference>
<dbReference type="Gene3D" id="2.60.120.1000">
    <property type="match status" value="1"/>
</dbReference>
<dbReference type="Gene3D" id="2.10.70.10">
    <property type="entry name" value="Complement Module, domain 1"/>
    <property type="match status" value="1"/>
</dbReference>
<dbReference type="InterPro" id="IPR008160">
    <property type="entry name" value="Collagen"/>
</dbReference>
<dbReference type="InterPro" id="IPR050149">
    <property type="entry name" value="Collagen_superfamily"/>
</dbReference>
<dbReference type="InterPro" id="IPR000885">
    <property type="entry name" value="Fib_collagen_C"/>
</dbReference>
<dbReference type="InterPro" id="IPR001007">
    <property type="entry name" value="VWF_dom"/>
</dbReference>
<dbReference type="PANTHER" id="PTHR24023">
    <property type="entry name" value="COLLAGEN ALPHA"/>
    <property type="match status" value="1"/>
</dbReference>
<dbReference type="PANTHER" id="PTHR24023:SF1082">
    <property type="entry name" value="COLLAGEN TRIPLE HELIX REPEAT"/>
    <property type="match status" value="1"/>
</dbReference>
<dbReference type="Pfam" id="PF01410">
    <property type="entry name" value="COLFI"/>
    <property type="match status" value="1"/>
</dbReference>
<dbReference type="Pfam" id="PF01391">
    <property type="entry name" value="Collagen"/>
    <property type="match status" value="5"/>
</dbReference>
<dbReference type="Pfam" id="PF00093">
    <property type="entry name" value="VWC"/>
    <property type="match status" value="1"/>
</dbReference>
<dbReference type="SMART" id="SM00038">
    <property type="entry name" value="COLFI"/>
    <property type="match status" value="1"/>
</dbReference>
<dbReference type="SMART" id="SM00214">
    <property type="entry name" value="VWC"/>
    <property type="match status" value="1"/>
</dbReference>
<dbReference type="SUPFAM" id="SSF57603">
    <property type="entry name" value="FnI-like domain"/>
    <property type="match status" value="1"/>
</dbReference>
<dbReference type="PROSITE" id="PS51461">
    <property type="entry name" value="NC1_FIB"/>
    <property type="match status" value="1"/>
</dbReference>
<dbReference type="PROSITE" id="PS01208">
    <property type="entry name" value="VWFC_1"/>
    <property type="match status" value="1"/>
</dbReference>
<dbReference type="PROSITE" id="PS50184">
    <property type="entry name" value="VWFC_2"/>
    <property type="match status" value="1"/>
</dbReference>
<sequence length="1487" mass="141973">MIRLGAPQSLVLLTLLIAAVLRCQGQDAQEAGSCLQNGQRYKDKDVWKPSSCRICVCDTGNVLCDDIICEDPDCLNPEIPFGECCPICPADLATASGKLGPKGQKGEPGDIRDIIGPRGPPGPQGPAGEQGPRGDRGDKGEKGAPGPRGRDGEPGTPGNPGPAGPPGPPGPPGLSAGNFAAQMAGGYDEKAGGAQMGVMQGPMGPMGPRGPPGPAGAPGPQGFQGNPGEPGEPGVSGPMGPRGPPGPAGKPGDDGEAGKPGKSGERGLPGPQGARGFPGTPGLPGVKGHRGYPGLDGAKGEAGAPGVKGESGSPGENGSPGPMGPRGLPGERGRTGPAGAAGARGNDGQPGPAGPPGPVGPAGGPGFPGAPGAKGEAGPTGARGPEGAQGSRGEPGNPGSPGPAGASGNPGTDGIPGAKGSAGAPGIAGAPGFPGPRGPPGPQGATGPLGPKGQAGEPGIAGFKGDQGPKGETGPAGPQGAPGPAGEEGKRGARGEPGGAGPIGPPGERGAPGNRGFPGQDGLAGPKGAPGERGPSGLTGPKGANGDPGRPGEPGLPGARGLTGRPGDAGPQGKVGPSGAPGEDGRPGPPGPQGARGQPGVMGFPGPKGANGEPGKAGEKGLAGAPGLRGLPGKDGETGAAGPPGPSGPAGERGEQGAPGPSGFQGLPGPPGPPGEGGKQGDQGIPGEAGAPGLVGPRGERGFPGERGSPGAQGLQGPRGLPGTPGTDGPKGAAGPDGPPGAQGPPGLQGMPGERGAAGIAGPKGDRGDVGEKGPEGAPGKDGGRGLTGPIGPPGPAGANGEKGEVGPPGPSGSTGARGAPGERGETGPPGPAGFAGPPGADGQPGAKGDQGEAGQKGDAGAPGPQGPSGAPGPQGPTGVTGPKGARGAQGPPGATGFPGAAGRVGPPGANGNPGPAGPPGPAGKDGPKGVRGDSGPPGRAGDPGLQGPAGAPGEKGEPGDDGPSGLDGPPGPQGLAGQRGIVGLPGQRGERGFPGLPGPSGEPGKQGAPGASGDRGPPGPVGPPGLTGPAGEPGREGSPGADGPPGRDGAAGVKGDRGETGALGAPGAPGPPGSPGPAGPTGKQGDRGEAGAQGPMGPSGPAGARGIAGPQGPRGDKGESGEQGERGLKGHRGFTGLQGLPGPPGPSGDQGASGPAGPSGPRGPPGPVGPSGKDGSNGIPGPIGPPGPRGRSGETGPVGPPGSPGPPGPPGPPGPGIDMSAFAGLGQREKGPDPMQYMRADEADSTLRQHDVEVDATLKSLNNQIESIRSPDGSRKNPARTCQDLKLCHPEWKSGDYWIDPNQGCTLDAMKVFCNMETGETCVYPNPATVPRKNWWSSKSKEKKHIWFGETMNGGFHFSYGDGNLAPNTANVQMTFLRLLSTEGSQNITYHCKNSIAYLDEAAGNLKKALLIQGSNDVEMRAEGNSRFTYTALKDGCTKHTGKWGKTVIEYRSQKTSRLPIIDIAPMDIGGAEQEFGVDIGPVCFL</sequence>
<name>CO2A1_MOUSE</name>
<protein>
    <recommendedName>
        <fullName evidence="2">Collagen alpha-1(II) chain</fullName>
    </recommendedName>
    <alternativeName>
        <fullName evidence="2">Alpha-1 type II collagen</fullName>
    </alternativeName>
    <component>
        <recommendedName>
            <fullName evidence="2">Collagen alpha-1(II) chain</fullName>
        </recommendedName>
    </component>
    <component>
        <recommendedName>
            <fullName evidence="2">Chondrocalcin</fullName>
        </recommendedName>
    </component>
</protein>
<comment type="function">
    <text>Type II collagen is specific for cartilaginous tissues. It is essential for the normal embryonic development of the skeleton, for linear growth and for the ability of cartilage to resist compressive forces.</text>
</comment>
<comment type="subunit">
    <text>Homotrimers of alpha 1(II) chains.</text>
</comment>
<comment type="interaction">
    <interactant intactId="EBI-738477">
        <id>P28481</id>
    </interactant>
    <interactant intactId="EBI-738477">
        <id>P28481</id>
        <label>Col2a1</label>
    </interactant>
    <organismsDiffer>false</organismsDiffer>
    <experiments>2</experiments>
</comment>
<comment type="subcellular location">
    <subcellularLocation>
        <location evidence="6">Secreted</location>
        <location evidence="6">Extracellular space</location>
        <location evidence="6">Extracellular matrix</location>
    </subcellularLocation>
</comment>
<comment type="alternative products">
    <event type="alternative splicing"/>
    <isoform>
        <id>P28481-3</id>
        <name>1</name>
        <sequence type="displayed"/>
    </isoform>
    <isoform>
        <id>P28481-1</id>
        <name>2</name>
        <name>Long</name>
        <sequence type="described" ref="VSP_022782"/>
    </isoform>
    <isoform>
        <id>P28481-2</id>
        <name>3</name>
        <name>Short</name>
        <sequence type="described" ref="VSP_022780 VSP_022782"/>
    </isoform>
    <isoform>
        <id>P28481-4</id>
        <name>4</name>
        <sequence type="described" ref="VSP_022781 VSP_022784"/>
    </isoform>
    <isoform>
        <id>P28481-5</id>
        <name>5</name>
        <sequence type="described" ref="VSP_022783 VSP_022785"/>
    </isoform>
    <isoform>
        <id>P28481-6</id>
        <name>6</name>
        <sequence type="described" ref="VSP_022781 VSP_022785"/>
    </isoform>
    <isoform>
        <id>P28481-7</id>
        <name>7</name>
        <sequence type="described" ref="VSP_022780"/>
    </isoform>
</comment>
<comment type="developmental stage">
    <text evidence="9 10">Expressed in chondrogenic tissues in advance of chondrocyte differentiation (PubMed:1879363). Expressed early in embryogenesis at 9.5 dpc both in the cranial mesenchyme destined for the chondrocranium, and the sclerotome of the somites, and at 12.5 dpc in the primordia of the hyoid and the laryngeal cartilage (PubMed:1879363). Detected in all the chondrogenic tissues of the axial and appendicular skeleton until the onset of endochondral ossification (PubMed:1879363). Expression also observed in non-chondrogenic tissues such as the notochord (PubMed:1879363). Also expressed much later in the tail tendon, at 16.5-18.5 dpc (PubMed:1879363). Transiently expressed in the heart at 9.5-12.5 dpc, the epidermis at 10.5-14.5 dpc, the calvarial mesenchyme at 12.5-16.5 dpc, the inner ear at 14.5 dpc and the fetal brain from 9.5-14.5 dpc (PubMed:1879363). Within the neural tube, expression is localized to the proliferative ventricular cells of the forebrain and midbrain of 9.5-10.5 dpc embryos, and subsequently, restricted to the rhombencephalic basal plate, the ventricular layer of the hindbrain and the cervical spinal cord (PubMed:1879363). Expressed in femoral head and rib cartilage at one week of age (PubMed:27270603).</text>
</comment>
<comment type="induction">
    <text evidence="10">Induced by mechanical load in chondocytes.</text>
</comment>
<comment type="domain">
    <text evidence="1">The C-terminal propeptide, also known as COLFI domain, have crucial roles in tissue growth and repair by controlling both the intracellular assembly of procollagen molecules and the extracellular assembly of collagen fibrils. It binds a calcium ion which is essential for its function (By similarity).</text>
</comment>
<comment type="PTM">
    <text evidence="3">Contains mostly 4-hydroxyproline. Prolines at the third position of the tripeptide repeating unit (G-X-P) are 4-hydroxylated in some or all of the chains.</text>
</comment>
<comment type="PTM">
    <text evidence="3">Contains 3-hydroxyproline at a few sites. This modification occurs on the first proline residue in the sequence motif Gly-Pro-Hyp, where Hyp is 4-hydroxyproline.</text>
</comment>
<comment type="PTM">
    <text evidence="3">Lysine residues at the third position of the tripeptide repeating unit (G-X-Y) are 5-hydroxylated in some or all of the chains.</text>
</comment>
<comment type="PTM">
    <text evidence="3">O-glycosylated on hydroxylated lysine residues. The O-linked glycan consists of a Glc-Gal disaccharide.</text>
</comment>
<comment type="disease">
    <text>Defects in Col2a1 are the cause of a phenotype resembling human spondyloepiphyseal dysplasia congenita (sedc). Homozygous sedc mice can be identified at birth by their small size and shortened trunk. Adults have shortened noses, dysplastic vertebrae, femora and tibias, and retinoschisis and hearing loss.</text>
</comment>
<comment type="similarity">
    <text evidence="6">Belongs to the fibrillar collagen family.</text>
</comment>
<comment type="sequence caution" evidence="12">
    <conflict type="erroneous initiation">
        <sequence resource="EMBL-CDS" id="BAC25865"/>
    </conflict>
    <text>Truncated N-terminus.</text>
</comment>
<organism>
    <name type="scientific">Mus musculus</name>
    <name type="common">Mouse</name>
    <dbReference type="NCBI Taxonomy" id="10090"/>
    <lineage>
        <taxon>Eukaryota</taxon>
        <taxon>Metazoa</taxon>
        <taxon>Chordata</taxon>
        <taxon>Craniata</taxon>
        <taxon>Vertebrata</taxon>
        <taxon>Euteleostomi</taxon>
        <taxon>Mammalia</taxon>
        <taxon>Eutheria</taxon>
        <taxon>Euarchontoglires</taxon>
        <taxon>Glires</taxon>
        <taxon>Rodentia</taxon>
        <taxon>Myomorpha</taxon>
        <taxon>Muroidea</taxon>
        <taxon>Muridae</taxon>
        <taxon>Murinae</taxon>
        <taxon>Mus</taxon>
        <taxon>Mus</taxon>
    </lineage>
</organism>
<accession>P28481</accession>
<accession>Q61428</accession>
<accession>Q62031</accession>
<accession>Q62032</accession>
<accession>Q62033</accession>
<accession>Q641K3</accession>
<accession>Q6LDB1</accession>
<accession>Q6LDI8</accession>
<accession>Q6LDI9</accession>
<accession>Q80VY3</accession>
<accession>Q80X38</accession>
<accession>Q8CEF7</accession>
<accession>Q8K0N6</accession>
<feature type="signal peptide" evidence="4">
    <location>
        <begin position="1"/>
        <end position="25"/>
    </location>
</feature>
<feature type="propeptide" id="PRO_0000005732" description="N-terminal propeptide" evidence="1">
    <location>
        <begin position="26"/>
        <end position="181"/>
    </location>
</feature>
<feature type="chain" id="PRO_0000005733" description="Collagen alpha-1(II) chain">
    <location>
        <begin position="182"/>
        <end position="1241"/>
    </location>
</feature>
<feature type="chain" id="PRO_0000005734" description="Chondrocalcin">
    <location>
        <begin position="1242"/>
        <end position="1487"/>
    </location>
</feature>
<feature type="domain" description="VWFC" evidence="5">
    <location>
        <begin position="32"/>
        <end position="89"/>
    </location>
</feature>
<feature type="domain" description="Fibrillar collagen NC1" evidence="6">
    <location>
        <begin position="1253"/>
        <end position="1487"/>
    </location>
</feature>
<feature type="region of interest" description="Disordered" evidence="7">
    <location>
        <begin position="96"/>
        <end position="179"/>
    </location>
</feature>
<feature type="region of interest" description="Disordered" evidence="7">
    <location>
        <begin position="191"/>
        <end position="1237"/>
    </location>
</feature>
<feature type="region of interest" description="Triple-helical region">
    <location>
        <begin position="201"/>
        <end position="1214"/>
    </location>
</feature>
<feature type="region of interest" description="Nonhelical region (C-terminal)">
    <location>
        <begin position="1215"/>
        <end position="1241"/>
    </location>
</feature>
<feature type="compositionally biased region" description="Basic and acidic residues" evidence="7">
    <location>
        <begin position="104"/>
        <end position="115"/>
    </location>
</feature>
<feature type="compositionally biased region" description="Basic and acidic residues" evidence="7">
    <location>
        <begin position="132"/>
        <end position="153"/>
    </location>
</feature>
<feature type="compositionally biased region" description="Pro residues" evidence="7">
    <location>
        <begin position="157"/>
        <end position="172"/>
    </location>
</feature>
<feature type="compositionally biased region" description="Low complexity" evidence="7">
    <location>
        <begin position="192"/>
        <end position="203"/>
    </location>
</feature>
<feature type="compositionally biased region" description="Pro residues" evidence="7">
    <location>
        <begin position="208"/>
        <end position="217"/>
    </location>
</feature>
<feature type="compositionally biased region" description="Low complexity" evidence="7">
    <location>
        <begin position="218"/>
        <end position="239"/>
    </location>
</feature>
<feature type="compositionally biased region" description="Basic and acidic residues" evidence="7">
    <location>
        <begin position="251"/>
        <end position="265"/>
    </location>
</feature>
<feature type="compositionally biased region" description="Low complexity" evidence="7">
    <location>
        <begin position="310"/>
        <end position="320"/>
    </location>
</feature>
<feature type="compositionally biased region" description="Low complexity" evidence="7">
    <location>
        <begin position="335"/>
        <end position="350"/>
    </location>
</feature>
<feature type="compositionally biased region" description="Gly residues" evidence="7">
    <location>
        <begin position="360"/>
        <end position="369"/>
    </location>
</feature>
<feature type="compositionally biased region" description="Low complexity" evidence="7">
    <location>
        <begin position="370"/>
        <end position="382"/>
    </location>
</feature>
<feature type="compositionally biased region" description="Low complexity" evidence="7">
    <location>
        <begin position="403"/>
        <end position="431"/>
    </location>
</feature>
<feature type="compositionally biased region" description="Pro residues" evidence="7">
    <location>
        <begin position="433"/>
        <end position="442"/>
    </location>
</feature>
<feature type="compositionally biased region" description="Low complexity" evidence="7">
    <location>
        <begin position="472"/>
        <end position="485"/>
    </location>
</feature>
<feature type="compositionally biased region" description="Low complexity" evidence="7">
    <location>
        <begin position="622"/>
        <end position="631"/>
    </location>
</feature>
<feature type="compositionally biased region" description="Low complexity" evidence="7">
    <location>
        <begin position="706"/>
        <end position="736"/>
    </location>
</feature>
<feature type="compositionally biased region" description="Basic and acidic residues" evidence="7">
    <location>
        <begin position="764"/>
        <end position="775"/>
    </location>
</feature>
<feature type="compositionally biased region" description="Low complexity" evidence="7">
    <location>
        <begin position="833"/>
        <end position="848"/>
    </location>
</feature>
<feature type="compositionally biased region" description="Low complexity" evidence="7">
    <location>
        <begin position="877"/>
        <end position="914"/>
    </location>
</feature>
<feature type="compositionally biased region" description="Low complexity" evidence="7">
    <location>
        <begin position="962"/>
        <end position="980"/>
    </location>
</feature>
<feature type="compositionally biased region" description="Pro residues" evidence="7">
    <location>
        <begin position="1069"/>
        <end position="1079"/>
    </location>
</feature>
<feature type="compositionally biased region" description="Basic and acidic residues" evidence="7">
    <location>
        <begin position="1115"/>
        <end position="1129"/>
    </location>
</feature>
<feature type="compositionally biased region" description="Low complexity" evidence="7">
    <location>
        <begin position="1148"/>
        <end position="1157"/>
    </location>
</feature>
<feature type="compositionally biased region" description="Low complexity" evidence="7">
    <location>
        <begin position="1171"/>
        <end position="1181"/>
    </location>
</feature>
<feature type="compositionally biased region" description="Pro residues" evidence="7">
    <location>
        <begin position="1199"/>
        <end position="1216"/>
    </location>
</feature>
<feature type="binding site" evidence="1">
    <location>
        <position position="1301"/>
    </location>
    <ligand>
        <name>Ca(2+)</name>
        <dbReference type="ChEBI" id="CHEBI:29108"/>
    </ligand>
</feature>
<feature type="binding site" evidence="1">
    <location>
        <position position="1303"/>
    </location>
    <ligand>
        <name>Ca(2+)</name>
        <dbReference type="ChEBI" id="CHEBI:29108"/>
    </ligand>
</feature>
<feature type="binding site" evidence="1">
    <location>
        <position position="1304"/>
    </location>
    <ligand>
        <name>Ca(2+)</name>
        <dbReference type="ChEBI" id="CHEBI:29108"/>
    </ligand>
</feature>
<feature type="binding site" evidence="1">
    <location>
        <position position="1306"/>
    </location>
    <ligand>
        <name>Ca(2+)</name>
        <dbReference type="ChEBI" id="CHEBI:29108"/>
    </ligand>
</feature>
<feature type="binding site" evidence="1">
    <location>
        <position position="1309"/>
    </location>
    <ligand>
        <name>Ca(2+)</name>
        <dbReference type="ChEBI" id="CHEBI:29108"/>
    </ligand>
</feature>
<feature type="site" description="Cleavage; by procollagen N-endopeptidase" evidence="1">
    <location>
        <begin position="181"/>
        <end position="182"/>
    </location>
</feature>
<feature type="site" description="Cleavage; by procollagen C-endopeptidase" evidence="1">
    <location>
        <begin position="1241"/>
        <end position="1242"/>
    </location>
</feature>
<feature type="modified residue" description="5-hydroxylysine" evidence="1">
    <location>
        <position position="190"/>
    </location>
</feature>
<feature type="modified residue" description="5-hydroxylysine" evidence="1">
    <location>
        <position position="287"/>
    </location>
</feature>
<feature type="modified residue" description="5-hydroxylysine" evidence="1">
    <location>
        <position position="299"/>
    </location>
</feature>
<feature type="modified residue" description="5-hydroxylysine" evidence="1">
    <location>
        <position position="308"/>
    </location>
</feature>
<feature type="modified residue" description="5-hydroxylysine" evidence="1">
    <location>
        <position position="374"/>
    </location>
</feature>
<feature type="modified residue" description="5-hydroxylysine" evidence="1">
    <location>
        <position position="608"/>
    </location>
</feature>
<feature type="modified residue" description="5-hydroxylysine" evidence="1">
    <location>
        <position position="620"/>
    </location>
</feature>
<feature type="modified residue" description="4-hydroxyproline" evidence="3">
    <location>
        <position position="659"/>
    </location>
</feature>
<feature type="modified residue" description="4-hydroxyproline" evidence="3">
    <location>
        <position position="668"/>
    </location>
</feature>
<feature type="modified residue" description="3-hydroxyproline" evidence="3">
    <location>
        <position position="670"/>
    </location>
</feature>
<feature type="modified residue" description="4-hydroxyproline" evidence="3">
    <location>
        <position position="671"/>
    </location>
</feature>
<feature type="modified residue" description="4-hydroxyproline" evidence="3">
    <location>
        <position position="674"/>
    </location>
</feature>
<feature type="modified residue" description="3-hydroxyproline" evidence="3">
    <location>
        <position position="907"/>
    </location>
</feature>
<feature type="modified residue" description="4-hydroxyproline" evidence="3">
    <location>
        <position position="908"/>
    </location>
</feature>
<feature type="modified residue" description="4-hydroxyproline" evidence="3">
    <location>
        <position position="914"/>
    </location>
</feature>
<feature type="modified residue" description="4-hydroxyproline" evidence="3">
    <location>
        <position position="920"/>
    </location>
</feature>
<feature type="modified residue" description="3-hydroxyproline" evidence="3">
    <location>
        <position position="1144"/>
    </location>
</feature>
<feature type="modified residue" description="4-hydroxyproline" evidence="3">
    <location>
        <position position="1181"/>
    </location>
</feature>
<feature type="modified residue" description="3-hydroxyproline" evidence="3">
    <location>
        <position position="1186"/>
    </location>
</feature>
<feature type="modified residue" description="4-hydroxyproline" evidence="3">
    <location>
        <position position="1187"/>
    </location>
</feature>
<feature type="modified residue" description="3-hydroxyproline" evidence="3">
    <location>
        <position position="1201"/>
    </location>
</feature>
<feature type="modified residue" description="4-hydroxyproline" evidence="3">
    <location>
        <position position="1202"/>
    </location>
</feature>
<feature type="modified residue" description="4-hydroxyproline" evidence="3">
    <location>
        <position position="1205"/>
    </location>
</feature>
<feature type="modified residue" description="3-hydroxyproline" evidence="3">
    <location>
        <position position="1207"/>
    </location>
</feature>
<feature type="modified residue" description="4-hydroxyproline" evidence="3">
    <location>
        <position position="1208"/>
    </location>
</feature>
<feature type="modified residue" description="4-hydroxyproline" evidence="3">
    <location>
        <position position="1211"/>
    </location>
</feature>
<feature type="modified residue" description="3-hydroxyproline" evidence="3">
    <location>
        <position position="1213"/>
    </location>
</feature>
<feature type="modified residue" description="4-hydroxyproline" evidence="3">
    <location>
        <position position="1214"/>
    </location>
</feature>
<feature type="glycosylation site" description="O-linked (Gal...) hydroxylysine" evidence="1">
    <location>
        <position position="190"/>
    </location>
</feature>
<feature type="glycosylation site" description="O-linked (Gal...) hydroxylysine" evidence="1">
    <location>
        <position position="287"/>
    </location>
</feature>
<feature type="glycosylation site" description="O-linked (Gal...) hydroxylysine" evidence="1">
    <location>
        <position position="299"/>
    </location>
</feature>
<feature type="glycosylation site" description="O-linked (Gal...) hydroxylysine" evidence="1">
    <location>
        <position position="308"/>
    </location>
</feature>
<feature type="glycosylation site" description="O-linked (Gal...) hydroxylysine" evidence="1">
    <location>
        <position position="374"/>
    </location>
</feature>
<feature type="glycosylation site" description="O-linked (Gal...) hydroxylysine" evidence="1">
    <location>
        <position position="608"/>
    </location>
</feature>
<feature type="glycosylation site" description="O-linked (Gal...) hydroxylysine" evidence="1">
    <location>
        <position position="620"/>
    </location>
</feature>
<feature type="disulfide bond" evidence="6">
    <location>
        <begin position="1283"/>
        <end position="1315"/>
    </location>
</feature>
<feature type="disulfide bond" description="Interchain (with C-1306)" evidence="6">
    <location>
        <position position="1289"/>
    </location>
</feature>
<feature type="disulfide bond" description="Interchain (with C-1289)" evidence="6">
    <location>
        <position position="1306"/>
    </location>
</feature>
<feature type="disulfide bond" evidence="6">
    <location>
        <begin position="1323"/>
        <end position="1485"/>
    </location>
</feature>
<feature type="disulfide bond" evidence="6">
    <location>
        <begin position="1393"/>
        <end position="1438"/>
    </location>
</feature>
<feature type="splice variant" id="VSP_022780" description="In isoform 3 and isoform 7." evidence="11">
    <original>QEAGSCLQNGQRYKDKDVWKPSSCRICVCDTGNVLCDDIICEDPDCLNPEIPFGECCPICPADLATASG</original>
    <variation>R</variation>
    <location>
        <begin position="29"/>
        <end position="97"/>
    </location>
</feature>
<feature type="splice variant" id="VSP_022781" description="In isoform 4 and isoform 6." evidence="12">
    <location>
        <begin position="103"/>
        <end position="113"/>
    </location>
</feature>
<feature type="splice variant" id="VSP_022782" description="In isoform 2 and isoform 3." evidence="12">
    <location>
        <begin position="114"/>
        <end position="142"/>
    </location>
</feature>
<feature type="splice variant" id="VSP_022783" description="In isoform 5." evidence="12">
    <location>
        <begin position="114"/>
        <end position="124"/>
    </location>
</feature>
<feature type="splice variant" id="VSP_022784" description="In isoform 4." evidence="12">
    <location>
        <begin position="125"/>
        <end position="142"/>
    </location>
</feature>
<feature type="splice variant" id="VSP_022785" description="In isoform 5 and isoform 6." evidence="12">
    <location>
        <begin position="143"/>
        <end position="177"/>
    </location>
</feature>
<feature type="sequence variant" description="In sedc mice." evidence="8">
    <original>R</original>
    <variation>C</variation>
    <location>
        <position position="989"/>
    </location>
</feature>
<feature type="sequence conflict" description="In Ref. 1; AAA68100/AAA68101/AAA68099/AAA68102." evidence="12" ref="1">
    <original>G</original>
    <variation>GR</variation>
    <location>
        <position position="97"/>
    </location>
</feature>
<feature type="sequence conflict" description="In Ref. 1; AAA68100/AAA68101/AAA68099/AAA68102." evidence="12" ref="1">
    <original>Q</original>
    <variation>M</variation>
    <location>
        <position position="272"/>
    </location>
</feature>
<feature type="sequence conflict" description="In Ref. 1; AAA68100/AAA68101/AAA68099/AAA68102." evidence="12" ref="1">
    <original>T</original>
    <variation>A</variation>
    <location>
        <position position="539"/>
    </location>
</feature>
<feature type="sequence conflict" description="In Ref. 1; AAA68100/AAA68101/AAA68099/AAA68102." evidence="12" ref="1">
    <original>V</original>
    <variation>A</variation>
    <location>
        <position position="806"/>
    </location>
</feature>
<feature type="sequence conflict" description="In Ref. 1; AAA68100/AAA68101/AAA68099." evidence="12" ref="1">
    <original>R</original>
    <variation>P</variation>
    <location>
        <position position="824"/>
    </location>
</feature>
<feature type="sequence conflict" description="In Ref. 1; AAA68100/AAA68101/AAA68099/AAA68102." evidence="12" ref="1">
    <original>Q</original>
    <variation>E</variation>
    <location>
        <position position="947"/>
    </location>
</feature>
<feature type="sequence conflict" description="In Ref. 2; AAH51383." evidence="12" ref="2">
    <original>G</original>
    <variation>R</variation>
    <location>
        <position position="1119"/>
    </location>
</feature>
<feature type="sequence conflict" description="In Ref. 4; AAC06113." evidence="12" ref="4">
    <original>LPGPP</original>
    <variation>SAWPS</variation>
    <location>
        <begin position="1141"/>
        <end position="1145"/>
    </location>
</feature>
<gene>
    <name evidence="13" type="primary">Col2a1</name>
</gene>
<keyword id="KW-0002">3D-structure</keyword>
<keyword id="KW-0025">Alternative splicing</keyword>
<keyword id="KW-0106">Calcium</keyword>
<keyword id="KW-0176">Collagen</keyword>
<keyword id="KW-0225">Disease variant</keyword>
<keyword id="KW-1015">Disulfide bond</keyword>
<keyword id="KW-0272">Extracellular matrix</keyword>
<keyword id="KW-0325">Glycoprotein</keyword>
<keyword id="KW-0379">Hydroxylation</keyword>
<keyword id="KW-0479">Metal-binding</keyword>
<keyword id="KW-1185">Reference proteome</keyword>
<keyword id="KW-0677">Repeat</keyword>
<keyword id="KW-0964">Secreted</keyword>
<keyword id="KW-0732">Signal</keyword>
<reference key="1">
    <citation type="journal article" date="1991" name="J. Biol. Chem.">
        <title>Mouse type II collagen gene. Complete nucleotide sequence, exon structure, and alternative splicing.</title>
        <authorList>
            <person name="Metsaeranta M."/>
            <person name="Toman D."/>
            <person name="de Crombrugghe B."/>
            <person name="Vuorio E."/>
        </authorList>
    </citation>
    <scope>NUCLEOTIDE SEQUENCE [GENOMIC DNA]</scope>
    <scope>ALTERNATIVE SPLICING</scope>
</reference>
<reference key="2">
    <citation type="journal article" date="2004" name="Genome Res.">
        <title>The status, quality, and expansion of the NIH full-length cDNA project: the Mammalian Gene Collection (MGC).</title>
        <authorList>
            <consortium name="The MGC Project Team"/>
        </authorList>
    </citation>
    <scope>NUCLEOTIDE SEQUENCE [LARGE SCALE MRNA] (ISOFORMS 1 AND 7)</scope>
    <source>
        <strain>C57BL/6J</strain>
        <tissue>Brain</tissue>
        <tissue>Eye</tissue>
        <tissue>Olfactory epithelium</tissue>
    </source>
</reference>
<reference key="3">
    <citation type="journal article" date="1991" name="Development">
        <title>Expression of the mouse alpha 1(II) collagen gene is not restricted to cartilage during development.</title>
        <authorList>
            <person name="Cheah K.S."/>
            <person name="Lau E.T."/>
            <person name="Au P.K."/>
            <person name="Tam P.P."/>
        </authorList>
    </citation>
    <scope>NUCLEOTIDE SEQUENCE [GENOMIC DNA] OF 1-28</scope>
    <scope>DEVELOPMENTAL STAGE</scope>
</reference>
<reference key="4">
    <citation type="journal article" date="1991" name="Mamm. Genome">
        <title>The mouse Col2a-1 gene is highly conserved and is linked to Int-1 on chromosome 15.</title>
        <authorList>
            <person name="Cheah K.S."/>
            <person name="Au P.K."/>
            <person name="Lau E.T."/>
            <person name="Little P.F."/>
            <person name="Stubbs L."/>
        </authorList>
    </citation>
    <scope>NUCLEOTIDE SEQUENCE [GENOMIC DNA] OF 1-28; 1031-1145 AND 1359-1487</scope>
</reference>
<reference key="5">
    <citation type="journal article" date="2005" name="Science">
        <title>The transcriptional landscape of the mammalian genome.</title>
        <authorList>
            <person name="Carninci P."/>
            <person name="Kasukawa T."/>
            <person name="Katayama S."/>
            <person name="Gough J."/>
            <person name="Frith M.C."/>
            <person name="Maeda N."/>
            <person name="Oyama R."/>
            <person name="Ravasi T."/>
            <person name="Lenhard B."/>
            <person name="Wells C."/>
            <person name="Kodzius R."/>
            <person name="Shimokawa K."/>
            <person name="Bajic V.B."/>
            <person name="Brenner S.E."/>
            <person name="Batalov S."/>
            <person name="Forrest A.R."/>
            <person name="Zavolan M."/>
            <person name="Davis M.J."/>
            <person name="Wilming L.G."/>
            <person name="Aidinis V."/>
            <person name="Allen J.E."/>
            <person name="Ambesi-Impiombato A."/>
            <person name="Apweiler R."/>
            <person name="Aturaliya R.N."/>
            <person name="Bailey T.L."/>
            <person name="Bansal M."/>
            <person name="Baxter L."/>
            <person name="Beisel K.W."/>
            <person name="Bersano T."/>
            <person name="Bono H."/>
            <person name="Chalk A.M."/>
            <person name="Chiu K.P."/>
            <person name="Choudhary V."/>
            <person name="Christoffels A."/>
            <person name="Clutterbuck D.R."/>
            <person name="Crowe M.L."/>
            <person name="Dalla E."/>
            <person name="Dalrymple B.P."/>
            <person name="de Bono B."/>
            <person name="Della Gatta G."/>
            <person name="di Bernardo D."/>
            <person name="Down T."/>
            <person name="Engstrom P."/>
            <person name="Fagiolini M."/>
            <person name="Faulkner G."/>
            <person name="Fletcher C.F."/>
            <person name="Fukushima T."/>
            <person name="Furuno M."/>
            <person name="Futaki S."/>
            <person name="Gariboldi M."/>
            <person name="Georgii-Hemming P."/>
            <person name="Gingeras T.R."/>
            <person name="Gojobori T."/>
            <person name="Green R.E."/>
            <person name="Gustincich S."/>
            <person name="Harbers M."/>
            <person name="Hayashi Y."/>
            <person name="Hensch T.K."/>
            <person name="Hirokawa N."/>
            <person name="Hill D."/>
            <person name="Huminiecki L."/>
            <person name="Iacono M."/>
            <person name="Ikeo K."/>
            <person name="Iwama A."/>
            <person name="Ishikawa T."/>
            <person name="Jakt M."/>
            <person name="Kanapin A."/>
            <person name="Katoh M."/>
            <person name="Kawasawa Y."/>
            <person name="Kelso J."/>
            <person name="Kitamura H."/>
            <person name="Kitano H."/>
            <person name="Kollias G."/>
            <person name="Krishnan S.P."/>
            <person name="Kruger A."/>
            <person name="Kummerfeld S.K."/>
            <person name="Kurochkin I.V."/>
            <person name="Lareau L.F."/>
            <person name="Lazarevic D."/>
            <person name="Lipovich L."/>
            <person name="Liu J."/>
            <person name="Liuni S."/>
            <person name="McWilliam S."/>
            <person name="Madan Babu M."/>
            <person name="Madera M."/>
            <person name="Marchionni L."/>
            <person name="Matsuda H."/>
            <person name="Matsuzawa S."/>
            <person name="Miki H."/>
            <person name="Mignone F."/>
            <person name="Miyake S."/>
            <person name="Morris K."/>
            <person name="Mottagui-Tabar S."/>
            <person name="Mulder N."/>
            <person name="Nakano N."/>
            <person name="Nakauchi H."/>
            <person name="Ng P."/>
            <person name="Nilsson R."/>
            <person name="Nishiguchi S."/>
            <person name="Nishikawa S."/>
            <person name="Nori F."/>
            <person name="Ohara O."/>
            <person name="Okazaki Y."/>
            <person name="Orlando V."/>
            <person name="Pang K.C."/>
            <person name="Pavan W.J."/>
            <person name="Pavesi G."/>
            <person name="Pesole G."/>
            <person name="Petrovsky N."/>
            <person name="Piazza S."/>
            <person name="Reed J."/>
            <person name="Reid J.F."/>
            <person name="Ring B.Z."/>
            <person name="Ringwald M."/>
            <person name="Rost B."/>
            <person name="Ruan Y."/>
            <person name="Salzberg S.L."/>
            <person name="Sandelin A."/>
            <person name="Schneider C."/>
            <person name="Schoenbach C."/>
            <person name="Sekiguchi K."/>
            <person name="Semple C.A."/>
            <person name="Seno S."/>
            <person name="Sessa L."/>
            <person name="Sheng Y."/>
            <person name="Shibata Y."/>
            <person name="Shimada H."/>
            <person name="Shimada K."/>
            <person name="Silva D."/>
            <person name="Sinclair B."/>
            <person name="Sperling S."/>
            <person name="Stupka E."/>
            <person name="Sugiura K."/>
            <person name="Sultana R."/>
            <person name="Takenaka Y."/>
            <person name="Taki K."/>
            <person name="Tammoja K."/>
            <person name="Tan S.L."/>
            <person name="Tang S."/>
            <person name="Taylor M.S."/>
            <person name="Tegner J."/>
            <person name="Teichmann S.A."/>
            <person name="Ueda H.R."/>
            <person name="van Nimwegen E."/>
            <person name="Verardo R."/>
            <person name="Wei C.L."/>
            <person name="Yagi K."/>
            <person name="Yamanishi H."/>
            <person name="Zabarovsky E."/>
            <person name="Zhu S."/>
            <person name="Zimmer A."/>
            <person name="Hide W."/>
            <person name="Bult C."/>
            <person name="Grimmond S.M."/>
            <person name="Teasdale R.D."/>
            <person name="Liu E.T."/>
            <person name="Brusic V."/>
            <person name="Quackenbush J."/>
            <person name="Wahlestedt C."/>
            <person name="Mattick J.S."/>
            <person name="Hume D.A."/>
            <person name="Kai C."/>
            <person name="Sasaki D."/>
            <person name="Tomaru Y."/>
            <person name="Fukuda S."/>
            <person name="Kanamori-Katayama M."/>
            <person name="Suzuki M."/>
            <person name="Aoki J."/>
            <person name="Arakawa T."/>
            <person name="Iida J."/>
            <person name="Imamura K."/>
            <person name="Itoh M."/>
            <person name="Kato T."/>
            <person name="Kawaji H."/>
            <person name="Kawagashira N."/>
            <person name="Kawashima T."/>
            <person name="Kojima M."/>
            <person name="Kondo S."/>
            <person name="Konno H."/>
            <person name="Nakano K."/>
            <person name="Ninomiya N."/>
            <person name="Nishio T."/>
            <person name="Okada M."/>
            <person name="Plessy C."/>
            <person name="Shibata K."/>
            <person name="Shiraki T."/>
            <person name="Suzuki S."/>
            <person name="Tagami M."/>
            <person name="Waki K."/>
            <person name="Watahiki A."/>
            <person name="Okamura-Oho Y."/>
            <person name="Suzuki H."/>
            <person name="Kawai J."/>
            <person name="Hayashizaki Y."/>
        </authorList>
    </citation>
    <scope>NUCLEOTIDE SEQUENCE [LARGE SCALE MRNA] OF 597-1487</scope>
    <source>
        <strain>C57BL/6J</strain>
        <tissue>Head</tissue>
    </source>
</reference>
<reference key="6">
    <citation type="journal article" date="1991" name="Biochim. Biophys. Acta">
        <title>Specific hybridization probes for mouse type I, II, III and IX collagen mRNAs.</title>
        <authorList>
            <person name="Metsaeranta M."/>
            <person name="Toman D."/>
            <person name="de Crombrugghe B."/>
            <person name="Vuorio E."/>
        </authorList>
    </citation>
    <scope>NUCLEOTIDE SEQUENCE [GENOMIC DNA] OF 1483-1487</scope>
</reference>
<reference key="7">
    <citation type="journal article" date="2003" name="J. Bone Miner. Res.">
        <title>A missense mutation in the mouse Col2a1 gene causes spondyloepiphyseal dysplasia congenita, hearing loss, and retinoschisis.</title>
        <authorList>
            <person name="Donahue L.R."/>
            <person name="Chang B."/>
            <person name="Mohan S."/>
            <person name="Miyakoshi N."/>
            <person name="Wergedal J.E."/>
            <person name="Baylink D.J."/>
            <person name="Hawes N.L."/>
            <person name="Rosen C.J."/>
            <person name="Ward-Bailey P."/>
            <person name="Zheng Q.Y."/>
            <person name="Bronson R.T."/>
            <person name="Johnson K.R."/>
            <person name="Davisson M.T."/>
        </authorList>
    </citation>
    <scope>VARIANT SEDC CYS-989</scope>
</reference>
<reference key="8">
    <citation type="journal article" date="2016" name="PLoS ONE">
        <title>Deficient Mechanical Activation of Anabolic Transcripts and Post-Traumatic Cartilage Degeneration in Matrilin-1 Knockout Mice.</title>
        <authorList>
            <person name="Chen Y."/>
            <person name="Cossman J."/>
            <person name="Jayasuriya C.T."/>
            <person name="Li X."/>
            <person name="Guan Y."/>
            <person name="Fonseca V."/>
            <person name="Yang K."/>
            <person name="Charbonneau C."/>
            <person name="Yu H."/>
            <person name="Kanbe K."/>
            <person name="Ma P."/>
            <person name="Darling E."/>
            <person name="Chen Q."/>
        </authorList>
    </citation>
    <scope>DEVELOPMENTAL STAGE</scope>
    <scope>INDUCTION</scope>
</reference>